<reference key="1">
    <citation type="submission" date="2008-04" db="EMBL/GenBank/DDBJ databases">
        <title>Complete sequence of Clostridium botulinum strain Eklund.</title>
        <authorList>
            <person name="Brinkac L.M."/>
            <person name="Brown J.L."/>
            <person name="Bruce D."/>
            <person name="Detter C."/>
            <person name="Munk C."/>
            <person name="Smith L.A."/>
            <person name="Smith T.J."/>
            <person name="Sutton G."/>
            <person name="Brettin T.S."/>
        </authorList>
    </citation>
    <scope>NUCLEOTIDE SEQUENCE [LARGE SCALE GENOMIC DNA]</scope>
    <source>
        <strain>Eklund 17B / Type B</strain>
    </source>
</reference>
<feature type="chain" id="PRO_1000143488" description="ATP synthase subunit beta">
    <location>
        <begin position="1"/>
        <end position="463"/>
    </location>
</feature>
<feature type="binding site" evidence="1">
    <location>
        <begin position="152"/>
        <end position="159"/>
    </location>
    <ligand>
        <name>ATP</name>
        <dbReference type="ChEBI" id="CHEBI:30616"/>
    </ligand>
</feature>
<sequence length="463" mass="50327">MPGKIGKVVQVIGPVVDIKFDSDSLPNLYNAISIDMGERTLIAEVEQHVGDDIVRTIAMEATEGLKRGMDAVDTEKAISVPVGDQVLGRLFNVLGKPIDNAGEVEAEEIYPIHRPAPSFKDQAVEPEMFETGIKVIDLLAPYQRGGKIGLFGGAGVGKTVLIQELINNIAKEHGGLSVFTGVGERSREGNDLYHEMRESGVIDKTALVFGQMNEPPGARMRVALTGLTMAEYFRDKGQDVLLFIDNIFRFTQAGSEVSALLGRIPSAVGYQPTLATEMGALQERITSTKNGSITSVQAVYVPADDLTDPAPATTFSHLDATTVLSRSIVELGIYPAVDPLESSSRILDPRLVGEEHYNVATKVKNILERYKELQDIIAILGVDELSDEDKAVVSRARKVQRFLSQPFTVGEQFTGMPGKYVSVKETIKGFKEILEGKYDDLPESAFLFIGSVEEAVQKAKSLA</sequence>
<keyword id="KW-0066">ATP synthesis</keyword>
<keyword id="KW-0067">ATP-binding</keyword>
<keyword id="KW-1003">Cell membrane</keyword>
<keyword id="KW-0139">CF(1)</keyword>
<keyword id="KW-0375">Hydrogen ion transport</keyword>
<keyword id="KW-0406">Ion transport</keyword>
<keyword id="KW-0472">Membrane</keyword>
<keyword id="KW-0547">Nucleotide-binding</keyword>
<keyword id="KW-1278">Translocase</keyword>
<keyword id="KW-0813">Transport</keyword>
<dbReference type="EC" id="7.1.2.2" evidence="1"/>
<dbReference type="EMBL" id="CP001056">
    <property type="protein sequence ID" value="ACD25166.1"/>
    <property type="molecule type" value="Genomic_DNA"/>
</dbReference>
<dbReference type="SMR" id="B2TK00"/>
<dbReference type="KEGG" id="cbk:CLL_A0498"/>
<dbReference type="PATRIC" id="fig|935198.13.peg.453"/>
<dbReference type="HOGENOM" id="CLU_022398_0_2_9"/>
<dbReference type="Proteomes" id="UP000001195">
    <property type="component" value="Chromosome"/>
</dbReference>
<dbReference type="GO" id="GO:0005886">
    <property type="term" value="C:plasma membrane"/>
    <property type="evidence" value="ECO:0007669"/>
    <property type="project" value="UniProtKB-SubCell"/>
</dbReference>
<dbReference type="GO" id="GO:0045259">
    <property type="term" value="C:proton-transporting ATP synthase complex"/>
    <property type="evidence" value="ECO:0007669"/>
    <property type="project" value="UniProtKB-KW"/>
</dbReference>
<dbReference type="GO" id="GO:0005524">
    <property type="term" value="F:ATP binding"/>
    <property type="evidence" value="ECO:0007669"/>
    <property type="project" value="UniProtKB-UniRule"/>
</dbReference>
<dbReference type="GO" id="GO:0016887">
    <property type="term" value="F:ATP hydrolysis activity"/>
    <property type="evidence" value="ECO:0007669"/>
    <property type="project" value="InterPro"/>
</dbReference>
<dbReference type="GO" id="GO:0046933">
    <property type="term" value="F:proton-transporting ATP synthase activity, rotational mechanism"/>
    <property type="evidence" value="ECO:0007669"/>
    <property type="project" value="UniProtKB-UniRule"/>
</dbReference>
<dbReference type="CDD" id="cd18110">
    <property type="entry name" value="ATP-synt_F1_beta_C"/>
    <property type="match status" value="1"/>
</dbReference>
<dbReference type="CDD" id="cd18115">
    <property type="entry name" value="ATP-synt_F1_beta_N"/>
    <property type="match status" value="1"/>
</dbReference>
<dbReference type="CDD" id="cd01133">
    <property type="entry name" value="F1-ATPase_beta_CD"/>
    <property type="match status" value="1"/>
</dbReference>
<dbReference type="FunFam" id="1.10.1140.10:FF:000001">
    <property type="entry name" value="ATP synthase subunit beta"/>
    <property type="match status" value="1"/>
</dbReference>
<dbReference type="FunFam" id="3.40.50.300:FF:000026">
    <property type="entry name" value="ATP synthase subunit beta"/>
    <property type="match status" value="1"/>
</dbReference>
<dbReference type="Gene3D" id="2.40.10.170">
    <property type="match status" value="1"/>
</dbReference>
<dbReference type="Gene3D" id="1.10.1140.10">
    <property type="entry name" value="Bovine Mitochondrial F1-atpase, Atp Synthase Beta Chain, Chain D, domain 3"/>
    <property type="match status" value="1"/>
</dbReference>
<dbReference type="Gene3D" id="3.40.50.300">
    <property type="entry name" value="P-loop containing nucleotide triphosphate hydrolases"/>
    <property type="match status" value="1"/>
</dbReference>
<dbReference type="HAMAP" id="MF_01347">
    <property type="entry name" value="ATP_synth_beta_bact"/>
    <property type="match status" value="1"/>
</dbReference>
<dbReference type="InterPro" id="IPR003593">
    <property type="entry name" value="AAA+_ATPase"/>
</dbReference>
<dbReference type="InterPro" id="IPR055190">
    <property type="entry name" value="ATP-synt_VA_C"/>
</dbReference>
<dbReference type="InterPro" id="IPR005722">
    <property type="entry name" value="ATP_synth_F1_bsu"/>
</dbReference>
<dbReference type="InterPro" id="IPR020003">
    <property type="entry name" value="ATPase_a/bsu_AS"/>
</dbReference>
<dbReference type="InterPro" id="IPR050053">
    <property type="entry name" value="ATPase_alpha/beta_chains"/>
</dbReference>
<dbReference type="InterPro" id="IPR004100">
    <property type="entry name" value="ATPase_F1/V1/A1_a/bsu_N"/>
</dbReference>
<dbReference type="InterPro" id="IPR036121">
    <property type="entry name" value="ATPase_F1/V1/A1_a/bsu_N_sf"/>
</dbReference>
<dbReference type="InterPro" id="IPR000194">
    <property type="entry name" value="ATPase_F1/V1/A1_a/bsu_nucl-bd"/>
</dbReference>
<dbReference type="InterPro" id="IPR024034">
    <property type="entry name" value="ATPase_F1/V1_b/a_C"/>
</dbReference>
<dbReference type="InterPro" id="IPR027417">
    <property type="entry name" value="P-loop_NTPase"/>
</dbReference>
<dbReference type="NCBIfam" id="TIGR01039">
    <property type="entry name" value="atpD"/>
    <property type="match status" value="1"/>
</dbReference>
<dbReference type="PANTHER" id="PTHR15184">
    <property type="entry name" value="ATP SYNTHASE"/>
    <property type="match status" value="1"/>
</dbReference>
<dbReference type="PANTHER" id="PTHR15184:SF71">
    <property type="entry name" value="ATP SYNTHASE SUBUNIT BETA, MITOCHONDRIAL"/>
    <property type="match status" value="1"/>
</dbReference>
<dbReference type="Pfam" id="PF00006">
    <property type="entry name" value="ATP-synt_ab"/>
    <property type="match status" value="1"/>
</dbReference>
<dbReference type="Pfam" id="PF02874">
    <property type="entry name" value="ATP-synt_ab_N"/>
    <property type="match status" value="1"/>
</dbReference>
<dbReference type="Pfam" id="PF22919">
    <property type="entry name" value="ATP-synt_VA_C"/>
    <property type="match status" value="1"/>
</dbReference>
<dbReference type="SMART" id="SM00382">
    <property type="entry name" value="AAA"/>
    <property type="match status" value="1"/>
</dbReference>
<dbReference type="SUPFAM" id="SSF47917">
    <property type="entry name" value="C-terminal domain of alpha and beta subunits of F1 ATP synthase"/>
    <property type="match status" value="1"/>
</dbReference>
<dbReference type="SUPFAM" id="SSF50615">
    <property type="entry name" value="N-terminal domain of alpha and beta subunits of F1 ATP synthase"/>
    <property type="match status" value="1"/>
</dbReference>
<dbReference type="SUPFAM" id="SSF52540">
    <property type="entry name" value="P-loop containing nucleoside triphosphate hydrolases"/>
    <property type="match status" value="1"/>
</dbReference>
<dbReference type="PROSITE" id="PS00152">
    <property type="entry name" value="ATPASE_ALPHA_BETA"/>
    <property type="match status" value="1"/>
</dbReference>
<evidence type="ECO:0000255" key="1">
    <source>
        <dbReference type="HAMAP-Rule" id="MF_01347"/>
    </source>
</evidence>
<gene>
    <name evidence="1" type="primary">atpD</name>
    <name type="ordered locus">CLL_A0498</name>
</gene>
<name>ATPB_CLOBB</name>
<organism>
    <name type="scientific">Clostridium botulinum (strain Eklund 17B / Type B)</name>
    <dbReference type="NCBI Taxonomy" id="935198"/>
    <lineage>
        <taxon>Bacteria</taxon>
        <taxon>Bacillati</taxon>
        <taxon>Bacillota</taxon>
        <taxon>Clostridia</taxon>
        <taxon>Eubacteriales</taxon>
        <taxon>Clostridiaceae</taxon>
        <taxon>Clostridium</taxon>
    </lineage>
</organism>
<protein>
    <recommendedName>
        <fullName evidence="1">ATP synthase subunit beta</fullName>
        <ecNumber evidence="1">7.1.2.2</ecNumber>
    </recommendedName>
    <alternativeName>
        <fullName evidence="1">ATP synthase F1 sector subunit beta</fullName>
    </alternativeName>
    <alternativeName>
        <fullName evidence="1">F-ATPase subunit beta</fullName>
    </alternativeName>
</protein>
<comment type="function">
    <text evidence="1">Produces ATP from ADP in the presence of a proton gradient across the membrane. The catalytic sites are hosted primarily by the beta subunits.</text>
</comment>
<comment type="catalytic activity">
    <reaction evidence="1">
        <text>ATP + H2O + 4 H(+)(in) = ADP + phosphate + 5 H(+)(out)</text>
        <dbReference type="Rhea" id="RHEA:57720"/>
        <dbReference type="ChEBI" id="CHEBI:15377"/>
        <dbReference type="ChEBI" id="CHEBI:15378"/>
        <dbReference type="ChEBI" id="CHEBI:30616"/>
        <dbReference type="ChEBI" id="CHEBI:43474"/>
        <dbReference type="ChEBI" id="CHEBI:456216"/>
        <dbReference type="EC" id="7.1.2.2"/>
    </reaction>
</comment>
<comment type="subunit">
    <text evidence="1">F-type ATPases have 2 components, CF(1) - the catalytic core - and CF(0) - the membrane proton channel. CF(1) has five subunits: alpha(3), beta(3), gamma(1), delta(1), epsilon(1). CF(0) has three main subunits: a(1), b(2) and c(9-12). The alpha and beta chains form an alternating ring which encloses part of the gamma chain. CF(1) is attached to CF(0) by a central stalk formed by the gamma and epsilon chains, while a peripheral stalk is formed by the delta and b chains.</text>
</comment>
<comment type="subcellular location">
    <subcellularLocation>
        <location evidence="1">Cell membrane</location>
        <topology evidence="1">Peripheral membrane protein</topology>
    </subcellularLocation>
</comment>
<comment type="similarity">
    <text evidence="1">Belongs to the ATPase alpha/beta chains family.</text>
</comment>
<accession>B2TK00</accession>
<proteinExistence type="inferred from homology"/>